<dbReference type="EMBL" id="BC100241">
    <property type="protein sequence ID" value="AAI00242.1"/>
    <property type="molecule type" value="mRNA"/>
</dbReference>
<dbReference type="RefSeq" id="NP_001089666.1">
    <property type="nucleotide sequence ID" value="NM_001096197.1"/>
</dbReference>
<dbReference type="SMR" id="Q498F0"/>
<dbReference type="BioGRID" id="592507">
    <property type="interactions" value="1"/>
</dbReference>
<dbReference type="IntAct" id="Q498F0">
    <property type="interactions" value="1"/>
</dbReference>
<dbReference type="GeneID" id="734726"/>
<dbReference type="KEGG" id="xla:734726"/>
<dbReference type="AGR" id="Xenbase:XB-GENE-6255294"/>
<dbReference type="CTD" id="734726"/>
<dbReference type="Xenbase" id="XB-GENE-6255294">
    <property type="gene designation" value="wdr44.L"/>
</dbReference>
<dbReference type="OMA" id="YKGCANT"/>
<dbReference type="OrthoDB" id="1932312at2759"/>
<dbReference type="Proteomes" id="UP000186698">
    <property type="component" value="Chromosome 8L"/>
</dbReference>
<dbReference type="Bgee" id="734726">
    <property type="expression patterns" value="Expressed in zone of skin and 19 other cell types or tissues"/>
</dbReference>
<dbReference type="GO" id="GO:0005829">
    <property type="term" value="C:cytosol"/>
    <property type="evidence" value="ECO:0007669"/>
    <property type="project" value="UniProtKB-SubCell"/>
</dbReference>
<dbReference type="GO" id="GO:0010008">
    <property type="term" value="C:endosome membrane"/>
    <property type="evidence" value="ECO:0007669"/>
    <property type="project" value="UniProtKB-SubCell"/>
</dbReference>
<dbReference type="GO" id="GO:0005794">
    <property type="term" value="C:Golgi apparatus"/>
    <property type="evidence" value="ECO:0007669"/>
    <property type="project" value="UniProtKB-SubCell"/>
</dbReference>
<dbReference type="GO" id="GO:0048471">
    <property type="term" value="C:perinuclear region of cytoplasm"/>
    <property type="evidence" value="ECO:0007669"/>
    <property type="project" value="UniProtKB-SubCell"/>
</dbReference>
<dbReference type="Gene3D" id="2.130.10.10">
    <property type="entry name" value="YVTN repeat-like/Quinoprotein amine dehydrogenase"/>
    <property type="match status" value="1"/>
</dbReference>
<dbReference type="InterPro" id="IPR020472">
    <property type="entry name" value="G-protein_beta_WD-40_rep"/>
</dbReference>
<dbReference type="InterPro" id="IPR015943">
    <property type="entry name" value="WD40/YVTN_repeat-like_dom_sf"/>
</dbReference>
<dbReference type="InterPro" id="IPR036322">
    <property type="entry name" value="WD40_repeat_dom_sf"/>
</dbReference>
<dbReference type="InterPro" id="IPR001680">
    <property type="entry name" value="WD40_rpt"/>
</dbReference>
<dbReference type="InterPro" id="IPR040324">
    <property type="entry name" value="WDR44/Dgr2"/>
</dbReference>
<dbReference type="PANTHER" id="PTHR14221">
    <property type="entry name" value="WD REPEAT DOMAIN 44"/>
    <property type="match status" value="1"/>
</dbReference>
<dbReference type="PANTHER" id="PTHR14221:SF0">
    <property type="entry name" value="WD REPEAT-CONTAINING PROTEIN 44"/>
    <property type="match status" value="1"/>
</dbReference>
<dbReference type="Pfam" id="PF00400">
    <property type="entry name" value="WD40"/>
    <property type="match status" value="4"/>
</dbReference>
<dbReference type="PRINTS" id="PR00320">
    <property type="entry name" value="GPROTEINBRPT"/>
</dbReference>
<dbReference type="SMART" id="SM00320">
    <property type="entry name" value="WD40"/>
    <property type="match status" value="6"/>
</dbReference>
<dbReference type="SUPFAM" id="SSF50978">
    <property type="entry name" value="WD40 repeat-like"/>
    <property type="match status" value="1"/>
</dbReference>
<dbReference type="PROSITE" id="PS50082">
    <property type="entry name" value="WD_REPEATS_2"/>
    <property type="match status" value="3"/>
</dbReference>
<dbReference type="PROSITE" id="PS50294">
    <property type="entry name" value="WD_REPEATS_REGION"/>
    <property type="match status" value="1"/>
</dbReference>
<organism>
    <name type="scientific">Xenopus laevis</name>
    <name type="common">African clawed frog</name>
    <dbReference type="NCBI Taxonomy" id="8355"/>
    <lineage>
        <taxon>Eukaryota</taxon>
        <taxon>Metazoa</taxon>
        <taxon>Chordata</taxon>
        <taxon>Craniata</taxon>
        <taxon>Vertebrata</taxon>
        <taxon>Euteleostomi</taxon>
        <taxon>Amphibia</taxon>
        <taxon>Batrachia</taxon>
        <taxon>Anura</taxon>
        <taxon>Pipoidea</taxon>
        <taxon>Pipidae</taxon>
        <taxon>Xenopodinae</taxon>
        <taxon>Xenopus</taxon>
        <taxon>Xenopus</taxon>
    </lineage>
</organism>
<feature type="chain" id="PRO_0000262772" description="WD repeat-containing protein 44">
    <location>
        <begin position="1"/>
        <end position="912"/>
    </location>
</feature>
<feature type="repeat" description="WD 1">
    <location>
        <begin position="511"/>
        <end position="550"/>
    </location>
</feature>
<feature type="repeat" description="WD 2">
    <location>
        <begin position="608"/>
        <end position="646"/>
    </location>
</feature>
<feature type="repeat" description="WD 3">
    <location>
        <begin position="648"/>
        <end position="688"/>
    </location>
</feature>
<feature type="repeat" description="WD 4">
    <location>
        <begin position="693"/>
        <end position="732"/>
    </location>
</feature>
<feature type="repeat" description="WD 5">
    <location>
        <begin position="743"/>
        <end position="782"/>
    </location>
</feature>
<feature type="repeat" description="WD 6">
    <location>
        <begin position="787"/>
        <end position="826"/>
    </location>
</feature>
<feature type="repeat" description="WD 7">
    <location>
        <begin position="841"/>
        <end position="880"/>
    </location>
</feature>
<feature type="repeat" description="WD 8">
    <location>
        <begin position="882"/>
        <end position="912"/>
    </location>
</feature>
<feature type="region of interest" description="Disordered" evidence="3">
    <location>
        <begin position="206"/>
        <end position="352"/>
    </location>
</feature>
<feature type="region of interest" description="Disordered" evidence="3">
    <location>
        <begin position="399"/>
        <end position="426"/>
    </location>
</feature>
<feature type="region of interest" description="Disordered" evidence="3">
    <location>
        <begin position="460"/>
        <end position="481"/>
    </location>
</feature>
<feature type="region of interest" description="Disordered" evidence="3">
    <location>
        <begin position="559"/>
        <end position="594"/>
    </location>
</feature>
<feature type="region of interest" description="Disordered" evidence="3">
    <location>
        <begin position="861"/>
        <end position="882"/>
    </location>
</feature>
<feature type="compositionally biased region" description="Pro residues" evidence="3">
    <location>
        <begin position="236"/>
        <end position="258"/>
    </location>
</feature>
<feature type="compositionally biased region" description="Basic and acidic residues" evidence="3">
    <location>
        <begin position="264"/>
        <end position="278"/>
    </location>
</feature>
<feature type="compositionally biased region" description="Polar residues" evidence="3">
    <location>
        <begin position="288"/>
        <end position="311"/>
    </location>
</feature>
<feature type="compositionally biased region" description="Basic and acidic residues" evidence="3">
    <location>
        <begin position="410"/>
        <end position="422"/>
    </location>
</feature>
<feature type="compositionally biased region" description="Acidic residues" evidence="3">
    <location>
        <begin position="469"/>
        <end position="478"/>
    </location>
</feature>
<feature type="compositionally biased region" description="Low complexity" evidence="3">
    <location>
        <begin position="563"/>
        <end position="575"/>
    </location>
</feature>
<keyword id="KW-0963">Cytoplasm</keyword>
<keyword id="KW-0967">Endosome</keyword>
<keyword id="KW-0333">Golgi apparatus</keyword>
<keyword id="KW-0472">Membrane</keyword>
<keyword id="KW-1185">Reference proteome</keyword>
<keyword id="KW-0677">Repeat</keyword>
<keyword id="KW-0853">WD repeat</keyword>
<proteinExistence type="evidence at transcript level"/>
<sequence length="912" mass="101686">MASDSDTEEFFDAPEDVNLSCSPAVSPLKSETFILKEEATYSKKAETRNIELKQDDSKEIIDSIIEESQKCSDTENENPVVEEKTEVLHETLIGDSVKTKQDLLSNIPELVVTESTFHDGVEDPLQQQISEYLEPDISRSQDAGPSADSAYVPSAIENIVDLTQDLKITEELKIAEEPEIPLIQEETKDPSKNIVEDVFSKLPTSDIIEQLPPAKPPRQICVEPDIVASTKKSGPNRPPQPINAPPPRPPPPARPAPPPRKKKGDTDFDRSSGFEYQKDGFLAGGLLSPNTLTENMNRDSQPSLDLASATSGEKIVTAQENGKAADGQLSSQSSECLGPQRPRSNSGRELTDDEILASVMIKNLDTGEEIPLSLAEEKLPTGINPLTLYIMRRTKEYVSNDAAQSDDEEKPQSHQSETDGGKLKQKTTQLKKFLGKSVKRAKHLAEEYGERAVNKVKSVRDEVFHTDQDDPSSSDDEGMPYTRPVKFKAAHGFKGPYDFEQIKVVQDLSGEHVGAVWTMKFSHCGRLLASAGQDNVVRIWVLKNAFDYFNNMRIKYNTEGRVSPSPSQESLNSSKSDTDGGVFSGTDDVDPDDKNAPFRQVPFCKYKGHTADLLDLSWSKNYFLLSSSMDKTVRLWHISRRECLCCFQHIDFVTAIAFHPRDDRYFLSGSLDGKLRLWNIPDKKVALWNEIDGQTKLITAANFCQNGKHAVIGTYDGRCIFYDTEHLKYHTQIHVRSTRGRNRVGRKITGIEPLPGENKILVTSNDSRIRLYDLRDLSLSMKYKGCVNSSSQIKASFSHDFTYIVSGSEDKYVYIWSTYHDLSKFTSVRRDRNDFWEGIKAHNAVVTSAIFAPNPGLMVSAETSSEKQEGDQAEPVENIPSGALKSDHTEVLLSADFTGAIKVFINKKKNIS</sequence>
<accession>Q498F0</accession>
<name>WDR44_XENLA</name>
<comment type="function">
    <text evidence="1 2">Downstream effector for rab11 (By similarity). May be involved in vesicle recycling (By similarity). May also be involved in the inhibition of the intracellular ciliogenesis pathway (By similarity).</text>
</comment>
<comment type="subcellular location">
    <subcellularLocation>
        <location evidence="2">Cytoplasm</location>
        <location evidence="2">Cytosol</location>
    </subcellularLocation>
    <subcellularLocation>
        <location evidence="2">Cytoplasm</location>
        <location evidence="2">Perinuclear region</location>
    </subcellularLocation>
    <subcellularLocation>
        <location evidence="2">Endosome membrane</location>
    </subcellularLocation>
    <subcellularLocation>
        <location evidence="2">Golgi apparatus</location>
        <location evidence="2">trans-Golgi network</location>
    </subcellularLocation>
</comment>
<evidence type="ECO:0000250" key="1">
    <source>
        <dbReference type="UniProtKB" id="Q5JSH3"/>
    </source>
</evidence>
<evidence type="ECO:0000250" key="2">
    <source>
        <dbReference type="UniProtKB" id="Q9R037"/>
    </source>
</evidence>
<evidence type="ECO:0000256" key="3">
    <source>
        <dbReference type="SAM" id="MobiDB-lite"/>
    </source>
</evidence>
<reference key="1">
    <citation type="submission" date="2005-08" db="EMBL/GenBank/DDBJ databases">
        <authorList>
            <consortium name="NIH - Xenopus Gene Collection (XGC) project"/>
        </authorList>
    </citation>
    <scope>NUCLEOTIDE SEQUENCE [LARGE SCALE MRNA]</scope>
    <source>
        <tissue>Egg</tissue>
    </source>
</reference>
<gene>
    <name type="primary">wdr44</name>
</gene>
<protein>
    <recommendedName>
        <fullName>WD repeat-containing protein 44</fullName>
    </recommendedName>
</protein>